<protein>
    <recommendedName>
        <fullName>Microtubule-associated protein 2</fullName>
        <shortName>MAP-2</shortName>
    </recommendedName>
</protein>
<feature type="chain" id="PRO_0000072748" description="Microtubule-associated protein 2">
    <location>
        <begin position="1"/>
        <end position="1828"/>
    </location>
</feature>
<feature type="repeat" description="Tau/MAP 1">
    <location>
        <begin position="1662"/>
        <end position="1692"/>
    </location>
</feature>
<feature type="repeat" description="Tau/MAP 2">
    <location>
        <begin position="1693"/>
        <end position="1723"/>
    </location>
</feature>
<feature type="repeat" description="Tau/MAP 3">
    <location>
        <begin position="1724"/>
        <end position="1755"/>
    </location>
</feature>
<feature type="region of interest" description="Disordered" evidence="4">
    <location>
        <begin position="1"/>
        <end position="86"/>
    </location>
</feature>
<feature type="region of interest" description="Disordered" evidence="4">
    <location>
        <begin position="109"/>
        <end position="379"/>
    </location>
</feature>
<feature type="region of interest" description="Disordered" evidence="4">
    <location>
        <begin position="397"/>
        <end position="490"/>
    </location>
</feature>
<feature type="region of interest" description="Disordered" evidence="4">
    <location>
        <begin position="573"/>
        <end position="684"/>
    </location>
</feature>
<feature type="region of interest" description="Interaction with KNDC1" evidence="6">
    <location>
        <begin position="702"/>
        <end position="745"/>
    </location>
</feature>
<feature type="region of interest" description="Disordered" evidence="4">
    <location>
        <begin position="765"/>
        <end position="794"/>
    </location>
</feature>
<feature type="region of interest" description="Disordered" evidence="4">
    <location>
        <begin position="823"/>
        <end position="863"/>
    </location>
</feature>
<feature type="region of interest" description="Disordered" evidence="4">
    <location>
        <begin position="930"/>
        <end position="986"/>
    </location>
</feature>
<feature type="region of interest" description="Disordered" evidence="4">
    <location>
        <begin position="1005"/>
        <end position="1044"/>
    </location>
</feature>
<feature type="region of interest" description="Disordered" evidence="4">
    <location>
        <begin position="1087"/>
        <end position="1165"/>
    </location>
</feature>
<feature type="region of interest" description="Disordered" evidence="4">
    <location>
        <begin position="1206"/>
        <end position="1228"/>
    </location>
</feature>
<feature type="region of interest" description="Disordered" evidence="4">
    <location>
        <begin position="1304"/>
        <end position="1373"/>
    </location>
</feature>
<feature type="region of interest" description="Disordered" evidence="4">
    <location>
        <begin position="1405"/>
        <end position="1640"/>
    </location>
</feature>
<feature type="region of interest" description="Calmodulin-binding" evidence="3">
    <location>
        <begin position="1452"/>
        <end position="1472"/>
    </location>
</feature>
<feature type="region of interest" description="Disordered" evidence="4">
    <location>
        <begin position="1778"/>
        <end position="1802"/>
    </location>
</feature>
<feature type="compositionally biased region" description="Basic and acidic residues" evidence="4">
    <location>
        <begin position="1"/>
        <end position="11"/>
    </location>
</feature>
<feature type="compositionally biased region" description="Basic and acidic residues" evidence="4">
    <location>
        <begin position="109"/>
        <end position="119"/>
    </location>
</feature>
<feature type="compositionally biased region" description="Low complexity" evidence="4">
    <location>
        <begin position="120"/>
        <end position="133"/>
    </location>
</feature>
<feature type="compositionally biased region" description="Basic and acidic residues" evidence="4">
    <location>
        <begin position="174"/>
        <end position="194"/>
    </location>
</feature>
<feature type="compositionally biased region" description="Basic and acidic residues" evidence="4">
    <location>
        <begin position="205"/>
        <end position="218"/>
    </location>
</feature>
<feature type="compositionally biased region" description="Basic and acidic residues" evidence="4">
    <location>
        <begin position="256"/>
        <end position="276"/>
    </location>
</feature>
<feature type="compositionally biased region" description="Basic and acidic residues" evidence="4">
    <location>
        <begin position="290"/>
        <end position="306"/>
    </location>
</feature>
<feature type="compositionally biased region" description="Basic and acidic residues" evidence="4">
    <location>
        <begin position="363"/>
        <end position="379"/>
    </location>
</feature>
<feature type="compositionally biased region" description="Basic and acidic residues" evidence="4">
    <location>
        <begin position="412"/>
        <end position="421"/>
    </location>
</feature>
<feature type="compositionally biased region" description="Basic and acidic residues" evidence="4">
    <location>
        <begin position="451"/>
        <end position="466"/>
    </location>
</feature>
<feature type="compositionally biased region" description="Basic and acidic residues" evidence="4">
    <location>
        <begin position="477"/>
        <end position="490"/>
    </location>
</feature>
<feature type="compositionally biased region" description="Polar residues" evidence="4">
    <location>
        <begin position="596"/>
        <end position="610"/>
    </location>
</feature>
<feature type="compositionally biased region" description="Basic and acidic residues" evidence="4">
    <location>
        <begin position="667"/>
        <end position="683"/>
    </location>
</feature>
<feature type="compositionally biased region" description="Polar residues" evidence="4">
    <location>
        <begin position="778"/>
        <end position="790"/>
    </location>
</feature>
<feature type="compositionally biased region" description="Basic and acidic residues" evidence="4">
    <location>
        <begin position="944"/>
        <end position="986"/>
    </location>
</feature>
<feature type="compositionally biased region" description="Basic and acidic residues" evidence="4">
    <location>
        <begin position="1103"/>
        <end position="1161"/>
    </location>
</feature>
<feature type="compositionally biased region" description="Basic and acidic residues" evidence="4">
    <location>
        <begin position="1324"/>
        <end position="1333"/>
    </location>
</feature>
<feature type="compositionally biased region" description="Basic and acidic residues" evidence="4">
    <location>
        <begin position="1359"/>
        <end position="1373"/>
    </location>
</feature>
<feature type="compositionally biased region" description="Basic and acidic residues" evidence="4">
    <location>
        <begin position="1412"/>
        <end position="1430"/>
    </location>
</feature>
<feature type="compositionally biased region" description="Basic residues" evidence="4">
    <location>
        <begin position="1431"/>
        <end position="1440"/>
    </location>
</feature>
<feature type="compositionally biased region" description="Basic and acidic residues" evidence="4">
    <location>
        <begin position="1445"/>
        <end position="1464"/>
    </location>
</feature>
<feature type="compositionally biased region" description="Basic and acidic residues" evidence="4">
    <location>
        <begin position="1471"/>
        <end position="1481"/>
    </location>
</feature>
<feature type="compositionally biased region" description="Basic and acidic residues" evidence="4">
    <location>
        <begin position="1527"/>
        <end position="1544"/>
    </location>
</feature>
<feature type="compositionally biased region" description="Low complexity" evidence="4">
    <location>
        <begin position="1546"/>
        <end position="1557"/>
    </location>
</feature>
<feature type="compositionally biased region" description="Low complexity" evidence="4">
    <location>
        <begin position="1567"/>
        <end position="1578"/>
    </location>
</feature>
<feature type="compositionally biased region" description="Low complexity" evidence="4">
    <location>
        <begin position="1591"/>
        <end position="1607"/>
    </location>
</feature>
<feature type="compositionally biased region" description="Polar residues" evidence="4">
    <location>
        <begin position="1613"/>
        <end position="1623"/>
    </location>
</feature>
<feature type="compositionally biased region" description="Low complexity" evidence="4">
    <location>
        <begin position="1783"/>
        <end position="1796"/>
    </location>
</feature>
<feature type="modified residue" description="Phosphoserine" evidence="10">
    <location>
        <position position="28"/>
    </location>
</feature>
<feature type="modified residue" description="Phosphoserine" evidence="10">
    <location>
        <position position="136"/>
    </location>
</feature>
<feature type="modified residue" description="Phosphoserine" evidence="10">
    <location>
        <position position="140"/>
    </location>
</feature>
<feature type="modified residue" description="Phosphoserine" evidence="10">
    <location>
        <position position="143"/>
    </location>
</feature>
<feature type="modified residue" description="Phosphoserine" evidence="10">
    <location>
        <position position="283"/>
    </location>
</feature>
<feature type="modified residue" description="Phosphoserine" evidence="10">
    <location>
        <position position="333"/>
    </location>
</feature>
<feature type="modified residue" description="Phosphoserine" evidence="2">
    <location>
        <position position="346"/>
    </location>
</feature>
<feature type="modified residue" description="Phosphoserine" evidence="10">
    <location>
        <position position="476"/>
    </location>
</feature>
<feature type="modified residue" description="Phosphoserine" evidence="10">
    <location>
        <position position="496"/>
    </location>
</feature>
<feature type="modified residue" description="Phosphoserine" evidence="2">
    <location>
        <position position="520"/>
    </location>
</feature>
<feature type="modified residue" description="Phosphoserine" evidence="10">
    <location>
        <position position="550"/>
    </location>
</feature>
<feature type="modified residue" description="Phosphoserine" evidence="10">
    <location>
        <position position="596"/>
    </location>
</feature>
<feature type="modified residue" description="Phosphoserine" evidence="10">
    <location>
        <position position="599"/>
    </location>
</feature>
<feature type="modified residue" description="Phosphoserine" evidence="10">
    <location>
        <position position="603"/>
    </location>
</feature>
<feature type="modified residue" description="Phosphoserine" evidence="10">
    <location>
        <position position="608"/>
    </location>
</feature>
<feature type="modified residue" description="Phosphoserine" evidence="2">
    <location>
        <position position="626"/>
    </location>
</feature>
<feature type="modified residue" description="Phosphoserine" evidence="8 10">
    <location>
        <position position="726"/>
    </location>
</feature>
<feature type="modified residue" description="Phosphoserine" evidence="10">
    <location>
        <position position="730"/>
    </location>
</feature>
<feature type="modified residue" description="Phosphothreonine" evidence="10">
    <location>
        <position position="734"/>
    </location>
</feature>
<feature type="modified residue" description="Phosphoserine" evidence="10">
    <location>
        <position position="737"/>
    </location>
</feature>
<feature type="modified residue" description="Phosphoserine" evidence="10">
    <location>
        <position position="739"/>
    </location>
</feature>
<feature type="modified residue" description="Phosphotyrosine" evidence="10">
    <location>
        <position position="746"/>
    </location>
</feature>
<feature type="modified residue" description="Phosphoserine" evidence="10">
    <location>
        <position position="823"/>
    </location>
</feature>
<feature type="modified residue" description="Phosphoserine" evidence="2">
    <location>
        <position position="883"/>
    </location>
</feature>
<feature type="modified residue" description="Phosphoserine" evidence="2">
    <location>
        <position position="892"/>
    </location>
</feature>
<feature type="modified residue" description="Phosphoserine" evidence="2">
    <location>
        <position position="938"/>
    </location>
</feature>
<feature type="modified residue" description="Phosphoserine" evidence="2">
    <location>
        <position position="1050"/>
    </location>
</feature>
<feature type="modified residue" description="Phosphoserine" evidence="10">
    <location>
        <position position="1139"/>
    </location>
</feature>
<feature type="modified residue" description="Phosphoserine" evidence="10">
    <location>
        <position position="1140"/>
    </location>
</feature>
<feature type="modified residue" description="Phosphoserine" evidence="10">
    <location>
        <position position="1145"/>
    </location>
</feature>
<feature type="modified residue" description="Phosphothreonine" evidence="2">
    <location>
        <position position="1160"/>
    </location>
</feature>
<feature type="modified residue" description="Phosphoserine" evidence="10">
    <location>
        <position position="1161"/>
    </location>
</feature>
<feature type="modified residue" description="Phosphoserine" evidence="10">
    <location>
        <position position="1165"/>
    </location>
</feature>
<feature type="modified residue" description="Phosphoserine" evidence="8 9 10">
    <location>
        <position position="1352"/>
    </location>
</feature>
<feature type="modified residue" description="Phosphothreonine" evidence="8 9 10">
    <location>
        <position position="1358"/>
    </location>
</feature>
<feature type="modified residue" description="Phosphoserine" evidence="10">
    <location>
        <position position="1539"/>
    </location>
</feature>
<feature type="modified residue" description="Phosphoserine" evidence="10">
    <location>
        <position position="1560"/>
    </location>
</feature>
<feature type="modified residue" description="Phosphoserine" evidence="10">
    <location>
        <position position="1592"/>
    </location>
</feature>
<feature type="modified residue" description="Phosphothreonine" evidence="8 10">
    <location>
        <position position="1606"/>
    </location>
</feature>
<feature type="modified residue" description="Phosphothreonine" evidence="8 9 10">
    <location>
        <position position="1609"/>
    </location>
</feature>
<feature type="modified residue" description="Phosphothreonine" evidence="10">
    <location>
        <position position="1620"/>
    </location>
</feature>
<feature type="modified residue" description="Phosphothreonine" evidence="10">
    <location>
        <position position="1623"/>
    </location>
</feature>
<feature type="modified residue" description="Phosphothreonine" evidence="10">
    <location>
        <position position="1650"/>
    </location>
</feature>
<feature type="modified residue" description="Phosphoserine" evidence="2">
    <location>
        <position position="1654"/>
    </location>
</feature>
<feature type="modified residue" description="Phosphoserine; by MARK1" evidence="2">
    <location>
        <position position="1680"/>
    </location>
</feature>
<feature type="modified residue" description="Phosphoserine" evidence="10">
    <location>
        <position position="1783"/>
    </location>
</feature>
<feature type="modified residue" description="Phosphoserine" evidence="10">
    <location>
        <position position="1788"/>
    </location>
</feature>
<feature type="modified residue" description="Phosphoserine" evidence="10">
    <location>
        <position position="1791"/>
    </location>
</feature>
<feature type="modified residue" description="Phosphoserine" evidence="2">
    <location>
        <position position="1796"/>
    </location>
</feature>
<feature type="modified residue" description="Phosphoserine" evidence="2">
    <location>
        <position position="1809"/>
    </location>
</feature>
<feature type="sequence conflict" description="In Ref. 1; no nucleotide entry and 2; AAA39490." evidence="7" ref="1 2">
    <original>H</original>
    <variation>Y</variation>
    <location>
        <position position="116"/>
    </location>
</feature>
<feature type="sequence conflict" description="In Ref. 1; no nucleotide entry and 2; AAA39490." evidence="7" ref="1 2">
    <original>K</original>
    <variation>E</variation>
    <location>
        <position position="455"/>
    </location>
</feature>
<feature type="sequence conflict" description="In Ref. 1; no nucleotide entry and 2; AAA39490." evidence="7" ref="1 2">
    <original>F</original>
    <variation>L</variation>
    <location>
        <position position="459"/>
    </location>
</feature>
<feature type="sequence conflict" description="In Ref. 1; no nucleotide entry and 2; AAA39490." evidence="7" ref="1 2">
    <original>D</original>
    <variation>G</variation>
    <location>
        <position position="644"/>
    </location>
</feature>
<feature type="sequence conflict" description="In Ref. 1; no nucleotide entry and 2; AAA39490." evidence="7" ref="1 2">
    <original>S</original>
    <variation>T</variation>
    <location>
        <position position="938"/>
    </location>
</feature>
<feature type="sequence conflict" description="In Ref. 1; no nucleotide entry and 2; AAA39490." evidence="7" ref="1 2">
    <original>R</original>
    <variation>G</variation>
    <location>
        <position position="947"/>
    </location>
</feature>
<comment type="function">
    <text>The exact function of MAP2 is unknown but MAPs may stabilize the microtubules against depolymerization. They also seem to have a stiffening effect on microtubules.</text>
</comment>
<comment type="subunit">
    <text evidence="1 5">Interacts with KNDC1 (via KIND2); the interaction enhances MAP2 phosphorylation and localizes KNDC1 to dendrites. Interacts with DPYSL5 (By similarity).</text>
</comment>
<comment type="interaction">
    <interactant intactId="EBI-397863">
        <id>P20357</id>
    </interactant>
    <interactant intactId="EBI-8605532">
        <id>Q0KK55</id>
        <label>Kndc1</label>
    </interactant>
    <organismsDiffer>false</organismsDiffer>
    <experiments>9</experiments>
</comment>
<comment type="subcellular location">
    <subcellularLocation>
        <location evidence="7">Cytoplasm</location>
        <location evidence="7">Cytoskeleton</location>
    </subcellularLocation>
    <subcellularLocation>
        <location evidence="5">Cell projection</location>
        <location evidence="5">Dendrite</location>
    </subcellularLocation>
</comment>
<comment type="PTM">
    <text evidence="2 5">Phosphorylated at serine residues in K-X-G-S motifs by causing MAP/microtubule affinity-regulating kinase (MARK1 or MARK2), detachment from microtubules, and their disassembly (By similarity). The interaction with KNDC1 enhances MAP2 threonine phosphorylation (PubMed:17984326).</text>
</comment>
<gene>
    <name type="primary">Map2</name>
    <name type="synonym">Mtap2</name>
</gene>
<sequence length="1828" mass="199132">MADERKDEGKAPHWTSASLTEAAAHPHSPEMKDQGGAGEGLSRNANGFPYREEEEGAFGEHRSQGTYSDTKENGINGELTSADRETAEEVSARIVQVVTAEAVAVLKGEQEKEAQHKDQPAALPLAAEETANLPPSPPPSPASEQTATVEEDLLTASKMEFPEQEKFPSSFAEPLDKGEMEFKMPSKPGEDFEHAALVPDTSKTPQDKKDLQGMEGEKLPPVPFAQTFGTNLEDRKQSTEPSIVMPSIGLSAEPPAPKEPKDWFIEMPTESKKDEWGLAAPISPGPLTPMREKDVLEDIPRWEGKQFDSPMPSPFHGGSFTLPLDTMKNERVSEGPRPFAPVFFQSDDKVSLQDPSALATSKESSKDEEPLKDKADKVADVSISEVTTLLGNVHSPVVEGYVGENISGEVKVTTDQEKKETSAPSVQEPTLTETEPQTKLDEKSTVSIEEAVAKKEESFKLRDDKTGVIQTSTEQSFSKEDQKGQEHTIDELKQDSFPISLEQAVTDAAMTSKTLGKVTSEPEAVSERREIQGLFEEKTADKNKLEGAGSATIAEVEMPFYEDKSGMSKYFETSALKEDMTRSTELGSDYYELSDSRGSAQESLDTISPKNQHDEKELQAKASQPSPPAQEAGYSTLAQSYTPDHPSELPEEPSSPQERMFTIDPKVYGEKRDLHSKNKDDLTLSRSLGLGGRSAIEQRSMSINLPMSCLDSIALGFNFGRGHDLSPLASDILTNTSGSMDEGDDYLPPTTPAVEKMPCFPIESKEEEDKAEQAKVTGGQTIQVETSSESPFPAKEYYKNGTVMAPDLPEMLDLAGTRSRLASVSADAEVARRKSVPSEAMLAESSTSLPPVADESPVTVKPDSQLEDMGYCVFNKYTVPLPSPVQDSENLSGESGSFYEGTDDKVRRDLATDLSLIEVKLAAAGRVKDEFTAEKEASPPTSADKSRLSREFDHDRKANDKLDTVLEKSEEHIDSKEHAKESEEMGGKVELFGLGITYDQASTKELITTKDTSPEKTEKGLSSVPEVAEVEPTTKADQGLDFAATKAEPSQLDIKVSDFGQMASGMNVDAGKAIELKFEVAQELTLSSEAPQEADSFMGVESGHIKEGGKVNETEVKEKVTKPDLVHQEAVDKEESYESSGEHESLTMESLKPDEGKKETSPETSLIQDEVALKLSVEIPCPPPVSEADLSTDEKGEVQMEFIQLPKEESTETPDIPAIPSDVTQPQPEAIVSEPAEVPSEEEEIEAGGEYDKLLFRSDTLQISDLLVSESREEFVETCPGELKGVVESVVTIEDDFITVVQTTTDEGESGSHSVRFAAPAQPEEERRPRPHDEELEIEMAAEAQAEPKDGSPDAPATPEKEEVAFSEYKTETYDDYKDETTIDDSIMDADSLWVDTQDDDRSILTEQLETIPKEERAEKDARRPSLEKHRKEKPFKTGRGRISTPERKVAKKEPSTVSRDEVRRKKAVYKKAELAKKSEVQAHSPSRKLILKPAIKYTRPTHLSCVKRKTTAASGDLAQAPGAFKQAKDKVTDGISKSPEKRSSLPRPSSILPPRRGVSGDREENSFSLNSSISSARRTTRSEPIRRAGKSGTSTPTTPGSTAITPGTPPSYSSRTPGTPGTPSYPRTPGTPKSGILVPSEKKVAIIRTPPKSPATPKQLRLINQPLPDLKNVKSKIGSTDNIKYQPKGGQVQIVTKKIDLSHVTSKCGSLKNIRHRPGGGRVKIESVKLDFKEKAQAKVGSLDNAHHVPGGGNVKIDSQKLNFREHAKARVDHGAEIITQSPSRSSVASPRRLSNVSSSGSINLLESPQLATLAEDVTAALAKQGL</sequence>
<reference key="1">
    <citation type="journal article" date="1988" name="Nucleic Acids Res.">
        <title>Complete sequence of a cDNA encoding mouse MAP2.</title>
        <authorList>
            <person name="Wang D."/>
            <person name="Lewis S.A."/>
            <person name="Cowan N.J."/>
        </authorList>
    </citation>
    <scope>NUCLEOTIDE SEQUENCE [MRNA]</scope>
</reference>
<reference key="2">
    <citation type="journal article" date="1988" name="Science">
        <title>Microtubule-associated protein MAP2 shares a microtubule binding motif with tau protein.</title>
        <authorList>
            <person name="Lewis S.A."/>
            <person name="Wang D."/>
            <person name="Cowan N.J."/>
        </authorList>
    </citation>
    <scope>NUCLEOTIDE SEQUENCE [MRNA]</scope>
</reference>
<reference key="3">
    <citation type="journal article" date="2009" name="PLoS Biol.">
        <title>Lineage-specific biology revealed by a finished genome assembly of the mouse.</title>
        <authorList>
            <person name="Church D.M."/>
            <person name="Goodstadt L."/>
            <person name="Hillier L.W."/>
            <person name="Zody M.C."/>
            <person name="Goldstein S."/>
            <person name="She X."/>
            <person name="Bult C.J."/>
            <person name="Agarwala R."/>
            <person name="Cherry J.L."/>
            <person name="DiCuccio M."/>
            <person name="Hlavina W."/>
            <person name="Kapustin Y."/>
            <person name="Meric P."/>
            <person name="Maglott D."/>
            <person name="Birtle Z."/>
            <person name="Marques A.C."/>
            <person name="Graves T."/>
            <person name="Zhou S."/>
            <person name="Teague B."/>
            <person name="Potamousis K."/>
            <person name="Churas C."/>
            <person name="Place M."/>
            <person name="Herschleb J."/>
            <person name="Runnheim R."/>
            <person name="Forrest D."/>
            <person name="Amos-Landgraf J."/>
            <person name="Schwartz D.C."/>
            <person name="Cheng Z."/>
            <person name="Lindblad-Toh K."/>
            <person name="Eichler E.E."/>
            <person name="Ponting C.P."/>
        </authorList>
    </citation>
    <scope>NUCLEOTIDE SEQUENCE [LARGE SCALE GENOMIC DNA]</scope>
    <source>
        <strain>C57BL/6J</strain>
    </source>
</reference>
<reference key="4">
    <citation type="submission" date="2009-01" db="UniProtKB">
        <authorList>
            <person name="Lubec G."/>
            <person name="Sunyer B."/>
            <person name="Chen W.-Q."/>
        </authorList>
    </citation>
    <scope>PROTEIN SEQUENCE OF 94-107; 583-597; 909-920; 989-1004; 1159-1174; 1403-1414 AND 1511-1538</scope>
    <scope>IDENTIFICATION BY MASS SPECTROMETRY</scope>
    <source>
        <strain>OF1</strain>
        <tissue>Hippocampus</tissue>
    </source>
</reference>
<reference key="5">
    <citation type="journal article" date="2004" name="Mol. Cell. Proteomics">
        <title>Phosphoproteomic analysis of the developing mouse brain.</title>
        <authorList>
            <person name="Ballif B.A."/>
            <person name="Villen J."/>
            <person name="Beausoleil S.A."/>
            <person name="Schwartz D."/>
            <person name="Gygi S.P."/>
        </authorList>
    </citation>
    <scope>PHOSPHORYLATION [LARGE SCALE ANALYSIS] AT SER-726; SER-1352; THR-1358; THR-1606 AND THR-1609</scope>
    <scope>IDENTIFICATION BY MASS SPECTROMETRY [LARGE SCALE ANALYSIS]</scope>
    <source>
        <tissue>Embryonic brain</tissue>
    </source>
</reference>
<reference key="6">
    <citation type="journal article" date="2006" name="Mol. Cell. Proteomics">
        <title>Comprehensive identification of phosphorylation sites in postsynaptic density preparations.</title>
        <authorList>
            <person name="Trinidad J.C."/>
            <person name="Specht C.G."/>
            <person name="Thalhammer A."/>
            <person name="Schoepfer R."/>
            <person name="Burlingame A.L."/>
        </authorList>
    </citation>
    <scope>PHOSPHORYLATION [LARGE SCALE ANALYSIS] AT SER-1352; THR-1358 AND THR-1609</scope>
    <scope>IDENTIFICATION BY MASS SPECTROMETRY [LARGE SCALE ANALYSIS]</scope>
    <source>
        <tissue>Brain</tissue>
    </source>
</reference>
<reference key="7">
    <citation type="journal article" date="2007" name="J. Cell Biol.">
        <title>Very-KIND, a KIND domain containing RasGEF, controls dendrite growth by linking Ras small GTPases and MAP2.</title>
        <authorList>
            <person name="Huang J."/>
            <person name="Furuya A."/>
            <person name="Furuichi T."/>
        </authorList>
    </citation>
    <scope>SUBCELLULAR LOCATION</scope>
    <scope>INTERACTION WITH KNDC1</scope>
    <scope>PHOSPHORYLATION</scope>
</reference>
<reference key="8">
    <citation type="journal article" date="2007" name="Mol. Cell. Proteomics">
        <title>Qualitative and quantitative analyses of protein phosphorylation in naive and stimulated mouse synaptosomal preparations.</title>
        <authorList>
            <person name="Munton R.P."/>
            <person name="Tweedie-Cullen R."/>
            <person name="Livingstone-Zatchej M."/>
            <person name="Weinandy F."/>
            <person name="Waidelich M."/>
            <person name="Longo D."/>
            <person name="Gehrig P."/>
            <person name="Potthast F."/>
            <person name="Rutishauser D."/>
            <person name="Gerrits B."/>
            <person name="Panse C."/>
            <person name="Schlapbach R."/>
            <person name="Mansuy I.M."/>
        </authorList>
    </citation>
    <scope>IDENTIFICATION BY MASS SPECTROMETRY [LARGE SCALE ANALYSIS]</scope>
    <source>
        <tissue>Brain cortex</tissue>
    </source>
</reference>
<reference key="9">
    <citation type="journal article" date="2010" name="Cell">
        <title>A tissue-specific atlas of mouse protein phosphorylation and expression.</title>
        <authorList>
            <person name="Huttlin E.L."/>
            <person name="Jedrychowski M.P."/>
            <person name="Elias J.E."/>
            <person name="Goswami T."/>
            <person name="Rad R."/>
            <person name="Beausoleil S.A."/>
            <person name="Villen J."/>
            <person name="Haas W."/>
            <person name="Sowa M.E."/>
            <person name="Gygi S.P."/>
        </authorList>
    </citation>
    <scope>PHOSPHORYLATION [LARGE SCALE ANALYSIS] AT SER-28; SER-136; SER-140; SER-143; SER-283; SER-333; SER-476; SER-496; SER-550; SER-596; SER-599; SER-603; SER-608; SER-726; SER-730; THR-734; SER-737; SER-739; TYR-746; SER-823; SER-1139; SER-1140; SER-1145; SER-1161; SER-1165; SER-1352; THR-1358; SER-1539; SER-1560; SER-1592; THR-1606; THR-1609; THR-1620; THR-1623; THR-1650; SER-1783; SER-1788 AND SER-1791</scope>
    <scope>IDENTIFICATION BY MASS SPECTROMETRY [LARGE SCALE ANALYSIS]</scope>
    <source>
        <tissue>Brain</tissue>
        <tissue>Brown adipose tissue</tissue>
        <tissue>Heart</tissue>
        <tissue>Kidney</tissue>
        <tissue>Liver</tissue>
        <tissue>Lung</tissue>
        <tissue>Pancreas</tissue>
        <tissue>Testis</tissue>
    </source>
</reference>
<reference key="10">
    <citation type="journal article" date="2011" name="FEBS J.">
        <title>Interaction between very-KIND Ras guanine exchange factor and microtubule-associated protein 2, and its role in dendrite growth -- structure and function of the second kinase noncatalytic C-lobe domain.</title>
        <authorList>
            <person name="Huang J."/>
            <person name="Furuya A."/>
            <person name="Hayashi K."/>
            <person name="Furuichi T."/>
        </authorList>
    </citation>
    <scope>INTERACTION WITH KNDC1</scope>
</reference>
<accession>P20357</accession>
<accession>E9QLE1</accession>
<evidence type="ECO:0000250" key="1">
    <source>
        <dbReference type="UniProtKB" id="P11137"/>
    </source>
</evidence>
<evidence type="ECO:0000250" key="2">
    <source>
        <dbReference type="UniProtKB" id="P15146"/>
    </source>
</evidence>
<evidence type="ECO:0000255" key="3"/>
<evidence type="ECO:0000256" key="4">
    <source>
        <dbReference type="SAM" id="MobiDB-lite"/>
    </source>
</evidence>
<evidence type="ECO:0000269" key="5">
    <source>
    </source>
</evidence>
<evidence type="ECO:0000269" key="6">
    <source>
    </source>
</evidence>
<evidence type="ECO:0000305" key="7"/>
<evidence type="ECO:0007744" key="8">
    <source>
    </source>
</evidence>
<evidence type="ECO:0007744" key="9">
    <source>
    </source>
</evidence>
<evidence type="ECO:0007744" key="10">
    <source>
    </source>
</evidence>
<proteinExistence type="evidence at protein level"/>
<keyword id="KW-0112">Calmodulin-binding</keyword>
<keyword id="KW-0966">Cell projection</keyword>
<keyword id="KW-0963">Cytoplasm</keyword>
<keyword id="KW-0206">Cytoskeleton</keyword>
<keyword id="KW-0903">Direct protein sequencing</keyword>
<keyword id="KW-0493">Microtubule</keyword>
<keyword id="KW-0597">Phosphoprotein</keyword>
<keyword id="KW-1185">Reference proteome</keyword>
<keyword id="KW-0677">Repeat</keyword>
<dbReference type="EMBL" id="M21041">
    <property type="protein sequence ID" value="AAA39490.1"/>
    <property type="molecule type" value="mRNA"/>
</dbReference>
<dbReference type="EMBL" id="AC091465">
    <property type="status" value="NOT_ANNOTATED_CDS"/>
    <property type="molecule type" value="Genomic_DNA"/>
</dbReference>
<dbReference type="CCDS" id="CCDS83550.1"/>
<dbReference type="PIR" id="A40115">
    <property type="entry name" value="A40115"/>
</dbReference>
<dbReference type="RefSeq" id="NP_001297563.1">
    <property type="nucleotide sequence ID" value="NM_001310634.2"/>
</dbReference>
<dbReference type="RefSeq" id="NP_001418677.1">
    <property type="nucleotide sequence ID" value="NM_001431748.1"/>
</dbReference>
<dbReference type="RefSeq" id="XP_006495817.1">
    <property type="nucleotide sequence ID" value="XM_006495754.2"/>
</dbReference>
<dbReference type="BioGRID" id="201585">
    <property type="interactions" value="44"/>
</dbReference>
<dbReference type="CORUM" id="P20357"/>
<dbReference type="FunCoup" id="P20357">
    <property type="interactions" value="1150"/>
</dbReference>
<dbReference type="IntAct" id="P20357">
    <property type="interactions" value="17"/>
</dbReference>
<dbReference type="MINT" id="P20357"/>
<dbReference type="STRING" id="10090.ENSMUSP00000109646"/>
<dbReference type="GlyGen" id="P20357">
    <property type="glycosylation" value="9 sites, 2 N-linked glycans (2 sites), 1 O-linked glycan (5 sites)"/>
</dbReference>
<dbReference type="iPTMnet" id="P20357"/>
<dbReference type="PhosphoSitePlus" id="P20357"/>
<dbReference type="SwissPalm" id="P20357"/>
<dbReference type="jPOST" id="P20357"/>
<dbReference type="PaxDb" id="10090-ENSMUSP00000076577"/>
<dbReference type="PeptideAtlas" id="P20357"/>
<dbReference type="ProteomicsDB" id="291359"/>
<dbReference type="Pumba" id="P20357"/>
<dbReference type="ABCD" id="P20357">
    <property type="antibodies" value="2 sequenced antibodies"/>
</dbReference>
<dbReference type="Antibodypedia" id="2169">
    <property type="antibodies" value="1373 antibodies from 47 providers"/>
</dbReference>
<dbReference type="DNASU" id="17756"/>
<dbReference type="Ensembl" id="ENSMUST00000114013.8">
    <property type="protein sequence ID" value="ENSMUSP00000109646.2"/>
    <property type="gene ID" value="ENSMUSG00000015222.19"/>
</dbReference>
<dbReference type="GeneID" id="17756"/>
<dbReference type="KEGG" id="mmu:17756"/>
<dbReference type="UCSC" id="uc007bhz.1">
    <property type="organism name" value="mouse"/>
</dbReference>
<dbReference type="AGR" id="MGI:97175"/>
<dbReference type="CTD" id="4133"/>
<dbReference type="MGI" id="MGI:97175">
    <property type="gene designation" value="Map2"/>
</dbReference>
<dbReference type="VEuPathDB" id="HostDB:ENSMUSG00000015222"/>
<dbReference type="eggNOG" id="KOG2418">
    <property type="taxonomic scope" value="Eukaryota"/>
</dbReference>
<dbReference type="GeneTree" id="ENSGT00940000156597"/>
<dbReference type="HOGENOM" id="CLU_002538_0_0_1"/>
<dbReference type="InParanoid" id="P20357"/>
<dbReference type="PhylomeDB" id="P20357"/>
<dbReference type="BioGRID-ORCS" id="17756">
    <property type="hits" value="1 hit in 79 CRISPR screens"/>
</dbReference>
<dbReference type="CD-CODE" id="CE726F99">
    <property type="entry name" value="Postsynaptic density"/>
</dbReference>
<dbReference type="ChiTaRS" id="Map2">
    <property type="organism name" value="mouse"/>
</dbReference>
<dbReference type="PRO" id="PR:P20357"/>
<dbReference type="Proteomes" id="UP000000589">
    <property type="component" value="Chromosome 1"/>
</dbReference>
<dbReference type="RNAct" id="P20357">
    <property type="molecule type" value="protein"/>
</dbReference>
<dbReference type="Bgee" id="ENSMUSG00000015222">
    <property type="expression patterns" value="Expressed in anterior amygdaloid area and 218 other cell types or tissues"/>
</dbReference>
<dbReference type="ExpressionAtlas" id="P20357">
    <property type="expression patterns" value="baseline and differential"/>
</dbReference>
<dbReference type="GO" id="GO:0097440">
    <property type="term" value="C:apical dendrite"/>
    <property type="evidence" value="ECO:0000314"/>
    <property type="project" value="MGI"/>
</dbReference>
<dbReference type="GO" id="GO:0043203">
    <property type="term" value="C:axon hillock"/>
    <property type="evidence" value="ECO:0000314"/>
    <property type="project" value="ARUK-UCL"/>
</dbReference>
<dbReference type="GO" id="GO:0043194">
    <property type="term" value="C:axon initial segment"/>
    <property type="evidence" value="ECO:0000314"/>
    <property type="project" value="ARUK-UCL"/>
</dbReference>
<dbReference type="GO" id="GO:0097442">
    <property type="term" value="C:CA3 pyramidal cell dendrite"/>
    <property type="evidence" value="ECO:0000314"/>
    <property type="project" value="MGI"/>
</dbReference>
<dbReference type="GO" id="GO:0044297">
    <property type="term" value="C:cell body"/>
    <property type="evidence" value="ECO:0000314"/>
    <property type="project" value="MGI"/>
</dbReference>
<dbReference type="GO" id="GO:0005737">
    <property type="term" value="C:cytoplasm"/>
    <property type="evidence" value="ECO:0000314"/>
    <property type="project" value="MGI"/>
</dbReference>
<dbReference type="GO" id="GO:0030425">
    <property type="term" value="C:dendrite"/>
    <property type="evidence" value="ECO:0000314"/>
    <property type="project" value="UniProtKB"/>
</dbReference>
<dbReference type="GO" id="GO:0043198">
    <property type="term" value="C:dendritic shaft"/>
    <property type="evidence" value="ECO:0000314"/>
    <property type="project" value="MGI"/>
</dbReference>
<dbReference type="GO" id="GO:0005874">
    <property type="term" value="C:microtubule"/>
    <property type="evidence" value="ECO:0007669"/>
    <property type="project" value="UniProtKB-KW"/>
</dbReference>
<dbReference type="GO" id="GO:0005875">
    <property type="term" value="C:microtubule associated complex"/>
    <property type="evidence" value="ECO:0000304"/>
    <property type="project" value="MGI"/>
</dbReference>
<dbReference type="GO" id="GO:0043005">
    <property type="term" value="C:neuron projection"/>
    <property type="evidence" value="ECO:0000314"/>
    <property type="project" value="MGI"/>
</dbReference>
<dbReference type="GO" id="GO:0043025">
    <property type="term" value="C:neuronal cell body"/>
    <property type="evidence" value="ECO:0000314"/>
    <property type="project" value="ARUK-UCL"/>
</dbReference>
<dbReference type="GO" id="GO:0034399">
    <property type="term" value="C:nuclear periphery"/>
    <property type="evidence" value="ECO:0000314"/>
    <property type="project" value="MGI"/>
</dbReference>
<dbReference type="GO" id="GO:0014069">
    <property type="term" value="C:postsynaptic density"/>
    <property type="evidence" value="ECO:0000314"/>
    <property type="project" value="MGI"/>
</dbReference>
<dbReference type="GO" id="GO:1990769">
    <property type="term" value="C:proximal neuron projection"/>
    <property type="evidence" value="ECO:0000314"/>
    <property type="project" value="ARUK-UCL"/>
</dbReference>
<dbReference type="GO" id="GO:0005516">
    <property type="term" value="F:calmodulin binding"/>
    <property type="evidence" value="ECO:0007669"/>
    <property type="project" value="UniProtKB-KW"/>
</dbReference>
<dbReference type="GO" id="GO:0005519">
    <property type="term" value="F:cytoskeletal regulatory protein binding"/>
    <property type="evidence" value="ECO:0000304"/>
    <property type="project" value="MGI"/>
</dbReference>
<dbReference type="GO" id="GO:0008017">
    <property type="term" value="F:microtubule binding"/>
    <property type="evidence" value="ECO:0000314"/>
    <property type="project" value="MGI"/>
</dbReference>
<dbReference type="GO" id="GO:0007409">
    <property type="term" value="P:axonogenesis"/>
    <property type="evidence" value="ECO:0000315"/>
    <property type="project" value="MGI"/>
</dbReference>
<dbReference type="GO" id="GO:0016358">
    <property type="term" value="P:dendrite development"/>
    <property type="evidence" value="ECO:0000315"/>
    <property type="project" value="MGI"/>
</dbReference>
<dbReference type="GO" id="GO:0030010">
    <property type="term" value="P:establishment of cell polarity"/>
    <property type="evidence" value="ECO:0000315"/>
    <property type="project" value="MGI"/>
</dbReference>
<dbReference type="GO" id="GO:0001578">
    <property type="term" value="P:microtubule bundle formation"/>
    <property type="evidence" value="ECO:0000315"/>
    <property type="project" value="MGI"/>
</dbReference>
<dbReference type="GO" id="GO:0000226">
    <property type="term" value="P:microtubule cytoskeleton organization"/>
    <property type="evidence" value="ECO:0000314"/>
    <property type="project" value="ARUK-UCL"/>
</dbReference>
<dbReference type="GO" id="GO:0030517">
    <property type="term" value="P:negative regulation of axon extension"/>
    <property type="evidence" value="ECO:0000315"/>
    <property type="project" value="ARUK-UCL"/>
</dbReference>
<dbReference type="GO" id="GO:0032880">
    <property type="term" value="P:regulation of protein localization"/>
    <property type="evidence" value="ECO:0000315"/>
    <property type="project" value="ARUK-UCL"/>
</dbReference>
<dbReference type="InterPro" id="IPR027324">
    <property type="entry name" value="MAP2/MAP4/Tau"/>
</dbReference>
<dbReference type="InterPro" id="IPR013588">
    <property type="entry name" value="MAP2_projctn"/>
</dbReference>
<dbReference type="InterPro" id="IPR001084">
    <property type="entry name" value="MAP_tubulin-bd_rpt"/>
</dbReference>
<dbReference type="PANTHER" id="PTHR11501">
    <property type="entry name" value="MICROTUBULE-ASSOCIATED PROTEIN"/>
    <property type="match status" value="1"/>
</dbReference>
<dbReference type="PANTHER" id="PTHR11501:SF15">
    <property type="entry name" value="MICROTUBULE-ASSOCIATED PROTEIN 2"/>
    <property type="match status" value="1"/>
</dbReference>
<dbReference type="Pfam" id="PF08377">
    <property type="entry name" value="MAP2_projctn"/>
    <property type="match status" value="1"/>
</dbReference>
<dbReference type="Pfam" id="PF00418">
    <property type="entry name" value="Tubulin-binding"/>
    <property type="match status" value="3"/>
</dbReference>
<dbReference type="PROSITE" id="PS00229">
    <property type="entry name" value="TAU_MAP_1"/>
    <property type="match status" value="2"/>
</dbReference>
<dbReference type="PROSITE" id="PS51491">
    <property type="entry name" value="TAU_MAP_2"/>
    <property type="match status" value="3"/>
</dbReference>
<name>MTAP2_MOUSE</name>
<organism>
    <name type="scientific">Mus musculus</name>
    <name type="common">Mouse</name>
    <dbReference type="NCBI Taxonomy" id="10090"/>
    <lineage>
        <taxon>Eukaryota</taxon>
        <taxon>Metazoa</taxon>
        <taxon>Chordata</taxon>
        <taxon>Craniata</taxon>
        <taxon>Vertebrata</taxon>
        <taxon>Euteleostomi</taxon>
        <taxon>Mammalia</taxon>
        <taxon>Eutheria</taxon>
        <taxon>Euarchontoglires</taxon>
        <taxon>Glires</taxon>
        <taxon>Rodentia</taxon>
        <taxon>Myomorpha</taxon>
        <taxon>Muroidea</taxon>
        <taxon>Muridae</taxon>
        <taxon>Murinae</taxon>
        <taxon>Mus</taxon>
        <taxon>Mus</taxon>
    </lineage>
</organism>